<gene>
    <name evidence="1" type="primary">katG</name>
    <name type="ordered locus">YPTB0811</name>
</gene>
<comment type="function">
    <text evidence="1">Bifunctional enzyme with both catalase and broad-spectrum peroxidase activity.</text>
</comment>
<comment type="catalytic activity">
    <reaction evidence="1">
        <text>H2O2 + AH2 = A + 2 H2O</text>
        <dbReference type="Rhea" id="RHEA:30275"/>
        <dbReference type="ChEBI" id="CHEBI:13193"/>
        <dbReference type="ChEBI" id="CHEBI:15377"/>
        <dbReference type="ChEBI" id="CHEBI:16240"/>
        <dbReference type="ChEBI" id="CHEBI:17499"/>
        <dbReference type="EC" id="1.11.1.21"/>
    </reaction>
</comment>
<comment type="catalytic activity">
    <reaction evidence="1">
        <text>2 H2O2 = O2 + 2 H2O</text>
        <dbReference type="Rhea" id="RHEA:20309"/>
        <dbReference type="ChEBI" id="CHEBI:15377"/>
        <dbReference type="ChEBI" id="CHEBI:15379"/>
        <dbReference type="ChEBI" id="CHEBI:16240"/>
        <dbReference type="EC" id="1.11.1.21"/>
    </reaction>
</comment>
<comment type="cofactor">
    <cofactor evidence="1">
        <name>heme b</name>
        <dbReference type="ChEBI" id="CHEBI:60344"/>
    </cofactor>
    <text evidence="1">Binds 1 heme b (iron(II)-protoporphyrin IX) group per dimer.</text>
</comment>
<comment type="subunit">
    <text evidence="1">Homodimer or homotetramer.</text>
</comment>
<comment type="PTM">
    <text evidence="1">Formation of the three residue Trp-Tyr-Met cross-link is important for the catalase, but not the peroxidase activity of the enzyme.</text>
</comment>
<comment type="similarity">
    <text evidence="1">Belongs to the peroxidase family. Peroxidase/catalase subfamily.</text>
</comment>
<evidence type="ECO:0000255" key="1">
    <source>
        <dbReference type="HAMAP-Rule" id="MF_01961"/>
    </source>
</evidence>
<protein>
    <recommendedName>
        <fullName evidence="1">Catalase-peroxidase</fullName>
        <shortName evidence="1">CP</shortName>
        <ecNumber evidence="1">1.11.1.21</ecNumber>
    </recommendedName>
    <alternativeName>
        <fullName evidence="1">Peroxidase/catalase</fullName>
    </alternativeName>
</protein>
<dbReference type="EC" id="1.11.1.21" evidence="1"/>
<dbReference type="EMBL" id="BX936398">
    <property type="protein sequence ID" value="CAH20051.1"/>
    <property type="molecule type" value="Genomic_DNA"/>
</dbReference>
<dbReference type="RefSeq" id="WP_002209433.1">
    <property type="nucleotide sequence ID" value="NZ_CP009712.1"/>
</dbReference>
<dbReference type="SMR" id="Q66E82"/>
<dbReference type="PeroxiBase" id="2639">
    <property type="entry name" value="YpsCP01"/>
</dbReference>
<dbReference type="GeneID" id="57975390"/>
<dbReference type="KEGG" id="ypo:BZ17_1745"/>
<dbReference type="KEGG" id="yps:YPTB0811"/>
<dbReference type="PATRIC" id="fig|273123.14.peg.1846"/>
<dbReference type="Proteomes" id="UP000001011">
    <property type="component" value="Chromosome"/>
</dbReference>
<dbReference type="GO" id="GO:0005829">
    <property type="term" value="C:cytosol"/>
    <property type="evidence" value="ECO:0007669"/>
    <property type="project" value="TreeGrafter"/>
</dbReference>
<dbReference type="GO" id="GO:0004096">
    <property type="term" value="F:catalase activity"/>
    <property type="evidence" value="ECO:0007669"/>
    <property type="project" value="UniProtKB-UniRule"/>
</dbReference>
<dbReference type="GO" id="GO:0020037">
    <property type="term" value="F:heme binding"/>
    <property type="evidence" value="ECO:0007669"/>
    <property type="project" value="InterPro"/>
</dbReference>
<dbReference type="GO" id="GO:0046872">
    <property type="term" value="F:metal ion binding"/>
    <property type="evidence" value="ECO:0007669"/>
    <property type="project" value="UniProtKB-KW"/>
</dbReference>
<dbReference type="GO" id="GO:0070301">
    <property type="term" value="P:cellular response to hydrogen peroxide"/>
    <property type="evidence" value="ECO:0007669"/>
    <property type="project" value="TreeGrafter"/>
</dbReference>
<dbReference type="GO" id="GO:0042744">
    <property type="term" value="P:hydrogen peroxide catabolic process"/>
    <property type="evidence" value="ECO:0007669"/>
    <property type="project" value="UniProtKB-KW"/>
</dbReference>
<dbReference type="CDD" id="cd00649">
    <property type="entry name" value="catalase_peroxidase_1"/>
    <property type="match status" value="1"/>
</dbReference>
<dbReference type="CDD" id="cd08200">
    <property type="entry name" value="catalase_peroxidase_2"/>
    <property type="match status" value="1"/>
</dbReference>
<dbReference type="FunFam" id="1.10.420.10:FF:000002">
    <property type="entry name" value="Catalase-peroxidase"/>
    <property type="match status" value="1"/>
</dbReference>
<dbReference type="FunFam" id="1.10.420.10:FF:000004">
    <property type="entry name" value="Catalase-peroxidase"/>
    <property type="match status" value="1"/>
</dbReference>
<dbReference type="FunFam" id="1.10.520.10:FF:000002">
    <property type="entry name" value="Catalase-peroxidase"/>
    <property type="match status" value="1"/>
</dbReference>
<dbReference type="Gene3D" id="1.10.520.10">
    <property type="match status" value="2"/>
</dbReference>
<dbReference type="Gene3D" id="1.10.420.10">
    <property type="entry name" value="Peroxidase, domain 2"/>
    <property type="match status" value="2"/>
</dbReference>
<dbReference type="HAMAP" id="MF_01961">
    <property type="entry name" value="Catal_peroxid"/>
    <property type="match status" value="1"/>
</dbReference>
<dbReference type="InterPro" id="IPR000763">
    <property type="entry name" value="Catalase_peroxidase"/>
</dbReference>
<dbReference type="InterPro" id="IPR002016">
    <property type="entry name" value="Haem_peroxidase"/>
</dbReference>
<dbReference type="InterPro" id="IPR010255">
    <property type="entry name" value="Haem_peroxidase_sf"/>
</dbReference>
<dbReference type="InterPro" id="IPR019794">
    <property type="entry name" value="Peroxidases_AS"/>
</dbReference>
<dbReference type="InterPro" id="IPR019793">
    <property type="entry name" value="Peroxidases_heam-ligand_BS"/>
</dbReference>
<dbReference type="NCBIfam" id="TIGR00198">
    <property type="entry name" value="cat_per_HPI"/>
    <property type="match status" value="1"/>
</dbReference>
<dbReference type="NCBIfam" id="NF011635">
    <property type="entry name" value="PRK15061.1"/>
    <property type="match status" value="1"/>
</dbReference>
<dbReference type="PANTHER" id="PTHR30555:SF0">
    <property type="entry name" value="CATALASE-PEROXIDASE"/>
    <property type="match status" value="1"/>
</dbReference>
<dbReference type="PANTHER" id="PTHR30555">
    <property type="entry name" value="HYDROPEROXIDASE I, BIFUNCTIONAL CATALASE-PEROXIDASE"/>
    <property type="match status" value="1"/>
</dbReference>
<dbReference type="Pfam" id="PF00141">
    <property type="entry name" value="peroxidase"/>
    <property type="match status" value="2"/>
</dbReference>
<dbReference type="PRINTS" id="PR00460">
    <property type="entry name" value="BPEROXIDASE"/>
</dbReference>
<dbReference type="PRINTS" id="PR00458">
    <property type="entry name" value="PEROXIDASE"/>
</dbReference>
<dbReference type="SUPFAM" id="SSF48113">
    <property type="entry name" value="Heme-dependent peroxidases"/>
    <property type="match status" value="2"/>
</dbReference>
<dbReference type="PROSITE" id="PS00435">
    <property type="entry name" value="PEROXIDASE_1"/>
    <property type="match status" value="1"/>
</dbReference>
<dbReference type="PROSITE" id="PS00436">
    <property type="entry name" value="PEROXIDASE_2"/>
    <property type="match status" value="1"/>
</dbReference>
<dbReference type="PROSITE" id="PS50873">
    <property type="entry name" value="PEROXIDASE_4"/>
    <property type="match status" value="1"/>
</dbReference>
<accession>Q66E82</accession>
<sequence>MLKKILPVLITLAIVHNTPTAWAAEAPKTDSFYLPKSLDLSPLRLHNIESNPYGKDFNYAQQFKTLDLEAVKKDIKTVLTTSQDWWPADYGNYGPFFIRMAWHGAGTYRIYDGRGGADGGQQRFEPLNSWPDNANLDKARRLLWPIKKKYGAKISWGDLMVLTGNVALESMGFKTLGFAGGREDDWQSDLVYWGAGNKMLSDNRDKNGKLPKPLAATQMGLIYVNPEGPNGKPDPVAAAKDIREAFARMAMNDEETVALIAGGHTFGKAHGAASPEKCLGAAPGEAGLEQQGLGWANKCGSGNGKDTITSGLEGAWTTDPTHFTMQYLSNLYKHEWVLTKSPAGAWQWKPKNAANVVPDATDPTKFHPLMMFTTDIALKVDPEYKKITTRFLENPEEFKMAFARAWFKLTHRDMGPAARYLGDEVPKETFIWQDPLPAANYKMIDSADISELKDKILKTGLSDTKLIKTAWASASTFRGTDFRGGDNGARIRLAPQKDWPVNDPAELHSVLAALMEVQNNFNKDRSDGKKVSLSDLIVLGGNAAIEDAAKKAGYSISIPFTPGRTDASQEETDVSSFAVLEPTADGFRNYYDAKRNTLSPIASLIDRANKLELTVPEMTVLIGGLRVLDVNSGGSKAGVLTNTPGQLNNNFFVNLLDMSTKWTKSPKAEGYFDGYDRKTGKLKWTASSVDLVFGSNPELRAVAEVYASDDAKEKFVHDFTKVWEKVMNLDRFDIKNN</sequence>
<proteinExistence type="inferred from homology"/>
<feature type="signal peptide" evidence="1">
    <location>
        <begin position="1"/>
        <end position="23"/>
    </location>
</feature>
<feature type="chain" id="PRO_5000098474" description="Catalase-peroxidase">
    <location>
        <begin position="24"/>
        <end position="737"/>
    </location>
</feature>
<feature type="active site" description="Proton acceptor" evidence="1">
    <location>
        <position position="103"/>
    </location>
</feature>
<feature type="binding site" description="axial binding residue" evidence="1">
    <location>
        <position position="264"/>
    </location>
    <ligand>
        <name>heme b</name>
        <dbReference type="ChEBI" id="CHEBI:60344"/>
    </ligand>
    <ligandPart>
        <name>Fe</name>
        <dbReference type="ChEBI" id="CHEBI:18248"/>
    </ligandPart>
</feature>
<feature type="site" description="Transition state stabilizer" evidence="1">
    <location>
        <position position="99"/>
    </location>
</feature>
<feature type="cross-link" description="Tryptophyl-tyrosyl-methioninium (Trp-Tyr) (with M-249)" evidence="1">
    <location>
        <begin position="102"/>
        <end position="223"/>
    </location>
</feature>
<feature type="cross-link" description="Tryptophyl-tyrosyl-methioninium (Tyr-Met) (with W-102)" evidence="1">
    <location>
        <begin position="223"/>
        <end position="249"/>
    </location>
</feature>
<keyword id="KW-0349">Heme</keyword>
<keyword id="KW-0376">Hydrogen peroxide</keyword>
<keyword id="KW-0408">Iron</keyword>
<keyword id="KW-0479">Metal-binding</keyword>
<keyword id="KW-0560">Oxidoreductase</keyword>
<keyword id="KW-0575">Peroxidase</keyword>
<keyword id="KW-0732">Signal</keyword>
<organism>
    <name type="scientific">Yersinia pseudotuberculosis serotype I (strain IP32953)</name>
    <dbReference type="NCBI Taxonomy" id="273123"/>
    <lineage>
        <taxon>Bacteria</taxon>
        <taxon>Pseudomonadati</taxon>
        <taxon>Pseudomonadota</taxon>
        <taxon>Gammaproteobacteria</taxon>
        <taxon>Enterobacterales</taxon>
        <taxon>Yersiniaceae</taxon>
        <taxon>Yersinia</taxon>
    </lineage>
</organism>
<reference key="1">
    <citation type="journal article" date="2004" name="Proc. Natl. Acad. Sci. U.S.A.">
        <title>Insights into the evolution of Yersinia pestis through whole-genome comparison with Yersinia pseudotuberculosis.</title>
        <authorList>
            <person name="Chain P.S.G."/>
            <person name="Carniel E."/>
            <person name="Larimer F.W."/>
            <person name="Lamerdin J."/>
            <person name="Stoutland P.O."/>
            <person name="Regala W.M."/>
            <person name="Georgescu A.M."/>
            <person name="Vergez L.M."/>
            <person name="Land M.L."/>
            <person name="Motin V.L."/>
            <person name="Brubaker R.R."/>
            <person name="Fowler J."/>
            <person name="Hinnebusch J."/>
            <person name="Marceau M."/>
            <person name="Medigue C."/>
            <person name="Simonet M."/>
            <person name="Chenal-Francisque V."/>
            <person name="Souza B."/>
            <person name="Dacheux D."/>
            <person name="Elliott J.M."/>
            <person name="Derbise A."/>
            <person name="Hauser L.J."/>
            <person name="Garcia E."/>
        </authorList>
    </citation>
    <scope>NUCLEOTIDE SEQUENCE [LARGE SCALE GENOMIC DNA]</scope>
    <source>
        <strain>IP32953</strain>
    </source>
</reference>
<name>KATG_YERPS</name>